<dbReference type="EMBL" id="AP006587">
    <property type="status" value="NOT_ANNOTATED_CDS"/>
    <property type="molecule type" value="Genomic_DNA"/>
</dbReference>
<dbReference type="EMBL" id="AB231735">
    <property type="protein sequence ID" value="BAE46888.1"/>
    <property type="molecule type" value="mRNA"/>
</dbReference>
<dbReference type="FunCoup" id="Q3C1V9">
    <property type="interactions" value="94"/>
</dbReference>
<dbReference type="BioMuta" id="-"/>
<dbReference type="MassIVE" id="Q3C1V9"/>
<dbReference type="PeptideAtlas" id="Q3C1V9"/>
<dbReference type="neXtProt" id="NX_Q3C1V9"/>
<dbReference type="InParanoid" id="Q3C1V9"/>
<dbReference type="PAN-GO" id="Q3C1V9">
    <property type="GO annotations" value="2 GO annotations based on evolutionary models"/>
</dbReference>
<dbReference type="Pharos" id="Q3C1V9">
    <property type="development level" value="Tdark"/>
</dbReference>
<dbReference type="Proteomes" id="UP000005640">
    <property type="component" value="Unplaced"/>
</dbReference>
<dbReference type="RNAct" id="Q3C1V9">
    <property type="molecule type" value="protein"/>
</dbReference>
<dbReference type="GO" id="GO:0005886">
    <property type="term" value="C:plasma membrane"/>
    <property type="evidence" value="ECO:0000318"/>
    <property type="project" value="GO_Central"/>
</dbReference>
<dbReference type="GO" id="GO:0004180">
    <property type="term" value="F:carboxypeptidase activity"/>
    <property type="evidence" value="ECO:0000318"/>
    <property type="project" value="GO_Central"/>
</dbReference>
<dbReference type="Gene3D" id="3.50.30.30">
    <property type="match status" value="1"/>
</dbReference>
<dbReference type="InterPro" id="IPR046450">
    <property type="entry name" value="PA_dom_sf"/>
</dbReference>
<dbReference type="SUPFAM" id="SSF52025">
    <property type="entry name" value="PA domain"/>
    <property type="match status" value="1"/>
</dbReference>
<reference key="1">
    <citation type="journal article" date="2006" name="Nature">
        <title>Human chromosome 11 DNA sequence and analysis including novel gene identification.</title>
        <authorList>
            <person name="Taylor T.D."/>
            <person name="Noguchi H."/>
            <person name="Totoki Y."/>
            <person name="Toyoda A."/>
            <person name="Kuroki Y."/>
            <person name="Dewar K."/>
            <person name="Lloyd C."/>
            <person name="Itoh T."/>
            <person name="Takeda T."/>
            <person name="Kim D.-W."/>
            <person name="She X."/>
            <person name="Barlow K.F."/>
            <person name="Bloom T."/>
            <person name="Bruford E."/>
            <person name="Chang J.L."/>
            <person name="Cuomo C.A."/>
            <person name="Eichler E."/>
            <person name="FitzGerald M.G."/>
            <person name="Jaffe D.B."/>
            <person name="LaButti K."/>
            <person name="Nicol R."/>
            <person name="Park H.-S."/>
            <person name="Seaman C."/>
            <person name="Sougnez C."/>
            <person name="Yang X."/>
            <person name="Zimmer A.R."/>
            <person name="Zody M.C."/>
            <person name="Birren B.W."/>
            <person name="Nusbaum C."/>
            <person name="Fujiyama A."/>
            <person name="Hattori M."/>
            <person name="Rogers J."/>
            <person name="Lander E.S."/>
            <person name="Sakaki Y."/>
        </authorList>
    </citation>
    <scope>NUCLEOTIDE SEQUENCE [LARGE SCALE GENOMIC DNA]</scope>
</reference>
<reference key="2">
    <citation type="submission" date="2005-08" db="EMBL/GenBank/DDBJ databases">
        <title>Identification of novel human genes predicted by combining multiple gene finders.</title>
        <authorList>
            <person name="Totoki Y."/>
            <person name="Yada T."/>
            <person name="Sakaki Y."/>
            <person name="Takeda T."/>
        </authorList>
    </citation>
    <scope>NUCLEOTIDE SEQUENCE [LARGE SCALE MRNA] OF 457-520</scope>
</reference>
<proteinExistence type="uncertain"/>
<name>YK041_HUMAN</name>
<comment type="caution">
    <text evidence="2">Product of a dubious CDS prediction.</text>
</comment>
<protein>
    <recommendedName>
        <fullName>Putative uncharacterized protein ENSP00000334305</fullName>
    </recommendedName>
</protein>
<evidence type="ECO:0000256" key="1">
    <source>
        <dbReference type="SAM" id="MobiDB-lite"/>
    </source>
</evidence>
<evidence type="ECO:0000305" key="2"/>
<sequence length="767" mass="84939">MTPPPPSPLLGTQVKEDRADYKEFQDFSSLPDTHNIAWDHSFYPFQEEEEHGVKGVESVLEKGVLDEGVLEAWGCCRRCRHAGWNRSQPSPELAGAVIHARAPAVGCRQRSGHLHVRLKQRLLERPCQEPLGKKYQLELPPLYERARKPEGSKNLPADGQGLRAVRADAALPVWPGGPGRPGPHAPEAGAEGQHQGQWPPADTRHLRTPKWPYKVATEEKPEAEEAEKKRQAKVQEKRLPPWKKRTLNQVHRVPWGQHRACQVMLLVSTKQLQRYLHFEKPAKPANMGQDPDCFGKSEGELATCLCGGESVVGETEAPGVRPDPRPEKDAKPAVSGCQEESWLQSEYDEMHPREEMNVPSLRSGSGCQVSGSPLAKGLHPLQPCHPHYMMWECCLFTLTLGTQACFEVCARRLKLAHFCPDTSLWSCGGQSPPVLCQLLDIISVSRDKVIGSHEKKPSSNPNQDDFHSSEYAYRCGIAEAVGLPSIPVHPIGYYDAEKLLEYESLLLQVSEPVNPELSAGPITGLLDRLSGFRDHGPPGSSCRSQRKGNGVETKDQAHRNRDPRGFQGGVLTARLFKMQVSLELFCGHQEHYLTRPVLAPGYPVHLGKAGTHWEQGPNMPTPEQHGTWGNRHLFAVLPLLFYTSLEIMSIGYSVVMAGRNVWQPTKGQMPHQPEQSCQTLALPMTIRHSWEGGAIRESSGWVSWKCHLKATEASQNPCVRATALRVGCSAVTYGVLGQAQGSAPWTSAFKTFSAGIAGLERHAWETM</sequence>
<organism>
    <name type="scientific">Homo sapiens</name>
    <name type="common">Human</name>
    <dbReference type="NCBI Taxonomy" id="9606"/>
    <lineage>
        <taxon>Eukaryota</taxon>
        <taxon>Metazoa</taxon>
        <taxon>Chordata</taxon>
        <taxon>Craniata</taxon>
        <taxon>Vertebrata</taxon>
        <taxon>Euteleostomi</taxon>
        <taxon>Mammalia</taxon>
        <taxon>Eutheria</taxon>
        <taxon>Euarchontoglires</taxon>
        <taxon>Primates</taxon>
        <taxon>Haplorrhini</taxon>
        <taxon>Catarrhini</taxon>
        <taxon>Hominidae</taxon>
        <taxon>Homo</taxon>
    </lineage>
</organism>
<feature type="chain" id="PRO_0000342629" description="Putative uncharacterized protein ENSP00000334305">
    <location>
        <begin position="1"/>
        <end position="767"/>
    </location>
</feature>
<feature type="region of interest" description="Disordered" evidence="1">
    <location>
        <begin position="171"/>
        <end position="209"/>
    </location>
</feature>
<feature type="region of interest" description="Disordered" evidence="1">
    <location>
        <begin position="314"/>
        <end position="340"/>
    </location>
</feature>
<feature type="region of interest" description="Disordered" evidence="1">
    <location>
        <begin position="533"/>
        <end position="566"/>
    </location>
</feature>
<feature type="compositionally biased region" description="Basic and acidic residues" evidence="1">
    <location>
        <begin position="322"/>
        <end position="331"/>
    </location>
</feature>
<feature type="compositionally biased region" description="Basic and acidic residues" evidence="1">
    <location>
        <begin position="552"/>
        <end position="564"/>
    </location>
</feature>
<keyword id="KW-1185">Reference proteome</keyword>
<accession>Q3C1V9</accession>
<accession>A6NNX0</accession>